<protein>
    <recommendedName>
        <fullName>Cysteine protease IpaJ</fullName>
        <ecNumber>3.4.22.-</ecNumber>
    </recommendedName>
    <alternativeName>
        <fullName>Effector protein IpaJ</fullName>
    </alternativeName>
    <alternativeName>
        <fullName>Invasion plasmid antigen J</fullName>
    </alternativeName>
</protein>
<accession>Q54150</accession>
<accession>Q7BEM0</accession>
<accession>Q8VSI0</accession>
<organism>
    <name type="scientific">Shigella flexneri</name>
    <dbReference type="NCBI Taxonomy" id="623"/>
    <lineage>
        <taxon>Bacteria</taxon>
        <taxon>Pseudomonadati</taxon>
        <taxon>Pseudomonadota</taxon>
        <taxon>Gammaproteobacteria</taxon>
        <taxon>Enterobacterales</taxon>
        <taxon>Enterobacteriaceae</taxon>
        <taxon>Shigella</taxon>
    </lineage>
</organism>
<comment type="function">
    <text evidence="2">Virulence factor that eliminates N-myristoyl protein modifications in infected host cells. Acts as a cysteine protease that cleaves the peptide bond between N-myristoylated Gly-2 and Asn-3 of human ARF1, leading to the elimination of the myristoyl group and alteration of protein trafficking in host cell. Could also cleave an array of N-myristoylated host proteins involved in cellular growth, signal transduction, autophagasome maturation and organelle function.</text>
</comment>
<comment type="subcellular location">
    <subcellularLocation>
        <location evidence="1">Secreted</location>
    </subcellularLocation>
    <subcellularLocation>
        <location evidence="5">Host cytoplasm</location>
    </subcellularLocation>
    <text evidence="4">Secreted via Mxi-Spa type III secretion system (T3SS), and delivered into the host cytoplasm.</text>
</comment>
<comment type="induction">
    <text evidence="3">Expression is temperature-independent.</text>
</comment>
<comment type="disruption phenotype">
    <text evidence="3">Mutants are not compromised in their ability to invade cultured epithelial cells or to form plaques on BHK cell monolayers.</text>
</comment>
<keyword id="KW-1035">Host cytoplasm</keyword>
<keyword id="KW-0378">Hydrolase</keyword>
<keyword id="KW-0614">Plasmid</keyword>
<keyword id="KW-0645">Protease</keyword>
<keyword id="KW-1185">Reference proteome</keyword>
<keyword id="KW-0964">Secreted</keyword>
<keyword id="KW-0843">Virulence</keyword>
<name>IPAJ_SHIFL</name>
<geneLocation type="plasmid">
    <name>pWR100</name>
</geneLocation>
<geneLocation type="plasmid">
    <name>pWR501</name>
</geneLocation>
<geneLocation type="plasmid">
    <name>pCP301</name>
</geneLocation>
<geneLocation type="plasmid">
    <name>pINV_F6_M1382</name>
</geneLocation>
<evidence type="ECO:0000269" key="1">
    <source>
    </source>
</evidence>
<evidence type="ECO:0000269" key="2">
    <source>
    </source>
</evidence>
<evidence type="ECO:0000269" key="3">
    <source>
    </source>
</evidence>
<evidence type="ECO:0000305" key="4"/>
<evidence type="ECO:0000305" key="5">
    <source>
    </source>
</evidence>
<evidence type="ECO:0000305" key="6">
    <source>
    </source>
</evidence>
<gene>
    <name type="primary">ipaJ</name>
    <name type="ordered locus">CP0122</name>
    <name type="ORF">pWR501_0130</name>
</gene>
<feature type="chain" id="PRO_0000423395" description="Cysteine protease IpaJ">
    <location>
        <begin position="1"/>
        <end position="259"/>
    </location>
</feature>
<feature type="active site" evidence="6">
    <location>
        <position position="64"/>
    </location>
</feature>
<feature type="active site" evidence="6">
    <location>
        <position position="206"/>
    </location>
</feature>
<feature type="active site" evidence="6">
    <location>
        <position position="218"/>
    </location>
</feature>
<feature type="mutagenesis site" description="Lack of activity." evidence="2">
    <original>C</original>
    <variation>A</variation>
    <location>
        <position position="64"/>
    </location>
</feature>
<feature type="mutagenesis site" description="Lack of activity." evidence="2">
    <original>H</original>
    <variation>A</variation>
    <location>
        <position position="206"/>
    </location>
</feature>
<feature type="mutagenesis site" description="Lack of activity." evidence="2">
    <original>D</original>
    <variation>A</variation>
    <location>
        <position position="218"/>
    </location>
</feature>
<dbReference type="EC" id="3.4.22.-"/>
<dbReference type="EMBL" id="U32973">
    <property type="protein sequence ID" value="AAA84386.1"/>
    <property type="molecule type" value="Genomic_DNA"/>
</dbReference>
<dbReference type="EMBL" id="AL391753">
    <property type="protein sequence ID" value="CAC05797.1"/>
    <property type="molecule type" value="Genomic_DNA"/>
</dbReference>
<dbReference type="EMBL" id="AF348706">
    <property type="protein sequence ID" value="AAK18440.1"/>
    <property type="molecule type" value="Genomic_DNA"/>
</dbReference>
<dbReference type="EMBL" id="AY206439">
    <property type="protein sequence ID" value="AAP78985.1"/>
    <property type="molecule type" value="Genomic_DNA"/>
</dbReference>
<dbReference type="EMBL" id="AF386526">
    <property type="protein sequence ID" value="AAL72344.2"/>
    <property type="molecule type" value="Genomic_DNA"/>
</dbReference>
<dbReference type="RefSeq" id="NP_085284.1">
    <property type="nucleotide sequence ID" value="NC_002698.1"/>
</dbReference>
<dbReference type="RefSeq" id="NP_858255.2">
    <property type="nucleotide sequence ID" value="NC_004851.1"/>
</dbReference>
<dbReference type="RefSeq" id="WP_005059304.1">
    <property type="nucleotide sequence ID" value="NZ_WPGS01000043.1"/>
</dbReference>
<dbReference type="RefSeq" id="YP_009062479.1">
    <property type="nucleotide sequence ID" value="NC_024996.1"/>
</dbReference>
<dbReference type="PaxDb" id="198214-CP0122"/>
<dbReference type="GeneID" id="3170828"/>
<dbReference type="KEGG" id="sfl:CP0122"/>
<dbReference type="PATRIC" id="fig|198214.7.peg.5377"/>
<dbReference type="HOGENOM" id="CLU_1146568_0_0_6"/>
<dbReference type="PHI-base" id="PHI:9253"/>
<dbReference type="Proteomes" id="UP000001006">
    <property type="component" value="Plasmid pCP301"/>
</dbReference>
<dbReference type="GO" id="GO:0005576">
    <property type="term" value="C:extracellular region"/>
    <property type="evidence" value="ECO:0007669"/>
    <property type="project" value="UniProtKB-SubCell"/>
</dbReference>
<dbReference type="GO" id="GO:0030430">
    <property type="term" value="C:host cell cytoplasm"/>
    <property type="evidence" value="ECO:0007669"/>
    <property type="project" value="UniProtKB-SubCell"/>
</dbReference>
<dbReference type="GO" id="GO:0008233">
    <property type="term" value="F:peptidase activity"/>
    <property type="evidence" value="ECO:0007669"/>
    <property type="project" value="UniProtKB-KW"/>
</dbReference>
<dbReference type="GO" id="GO:0006508">
    <property type="term" value="P:proteolysis"/>
    <property type="evidence" value="ECO:0007669"/>
    <property type="project" value="UniProtKB-KW"/>
</dbReference>
<proteinExistence type="evidence at protein level"/>
<reference key="1">
    <citation type="journal article" date="1997" name="Microb. Pathog.">
        <title>Identification and molecular characterization of a 27 kDa Shigella flexneri invasion plasmid antigen, IpaJ.</title>
        <authorList>
            <person name="Buysse J.M."/>
            <person name="Dunyak D.S."/>
            <person name="Hartman A.B."/>
            <person name="Venkatesan M.M."/>
        </authorList>
    </citation>
    <scope>NUCLEOTIDE SEQUENCE [GENOMIC DNA]</scope>
    <scope>INDUCTION</scope>
    <scope>DISRUPTION PHENOTYPE</scope>
    <source>
        <strain>M90T / Serotype 5a</strain>
        <plasmid>pWR100</plasmid>
    </source>
</reference>
<reference key="2">
    <citation type="journal article" date="2000" name="Mol. Microbiol.">
        <title>The virulence plasmid pWR100 and the repertoire of proteins secreted by the type III secretion apparatus of Shigella flexneri.</title>
        <authorList>
            <person name="Buchrieser C."/>
            <person name="Glaser P."/>
            <person name="Rusniok C."/>
            <person name="Nedjari H."/>
            <person name="d'Hauteville H."/>
            <person name="Kunst F."/>
            <person name="Sansonetti P.J."/>
            <person name="Parsot C."/>
        </authorList>
    </citation>
    <scope>NUCLEOTIDE SEQUENCE [GENOMIC DNA]</scope>
    <source>
        <strain>M90T / Serotype 5a</strain>
        <plasmid>pWR100</plasmid>
    </source>
</reference>
<reference key="3">
    <citation type="journal article" date="2001" name="Infect. Immun.">
        <title>Complete DNA sequence and analysis of the large virulence plasmid of Shigella flexneri.</title>
        <authorList>
            <person name="Venkatesan M.M."/>
            <person name="Goldberg M.B."/>
            <person name="Rose D.J."/>
            <person name="Grotbeck E.J."/>
            <person name="Burland V."/>
            <person name="Blattner F.R."/>
        </authorList>
    </citation>
    <scope>NUCLEOTIDE SEQUENCE [GENOMIC DNA]</scope>
    <source>
        <strain>M90T / Serotype 5a</strain>
        <plasmid>pWR501</plasmid>
    </source>
</reference>
<reference key="4">
    <citation type="journal article" date="2003" name="Infect. Immun.">
        <title>Comparison of two major forms of the Shigella virulence plasmid pINV: positive selection is a major force driving the divergence.</title>
        <authorList>
            <person name="Lan R."/>
            <person name="Stevenson G."/>
            <person name="Reeves P.R."/>
        </authorList>
    </citation>
    <scope>NUCLEOTIDE SEQUENCE [GENOMIC DNA]</scope>
    <source>
        <strain>M1382 / Serotype 6</strain>
        <plasmid>pINV_F6_M1382</plasmid>
    </source>
</reference>
<reference key="5">
    <citation type="journal article" date="2002" name="Nucleic Acids Res.">
        <title>Genome sequence of Shigella flexneri 2a: insights into pathogenicity through comparison with genomes of Escherichia coli K12 and O157.</title>
        <authorList>
            <person name="Jin Q."/>
            <person name="Yuan Z."/>
            <person name="Xu J."/>
            <person name="Wang Y."/>
            <person name="Shen Y."/>
            <person name="Lu W."/>
            <person name="Wang J."/>
            <person name="Liu H."/>
            <person name="Yang J."/>
            <person name="Yang F."/>
            <person name="Zhang X."/>
            <person name="Zhang J."/>
            <person name="Yang G."/>
            <person name="Wu H."/>
            <person name="Qu D."/>
            <person name="Dong J."/>
            <person name="Sun L."/>
            <person name="Xue Y."/>
            <person name="Zhao A."/>
            <person name="Gao Y."/>
            <person name="Zhu J."/>
            <person name="Kan B."/>
            <person name="Ding K."/>
            <person name="Chen S."/>
            <person name="Cheng H."/>
            <person name="Yao Z."/>
            <person name="He B."/>
            <person name="Chen R."/>
            <person name="Ma D."/>
            <person name="Qiang B."/>
            <person name="Wen Y."/>
            <person name="Hou Y."/>
            <person name="Yu J."/>
        </authorList>
    </citation>
    <scope>NUCLEOTIDE SEQUENCE [LARGE SCALE GENOMIC DNA]</scope>
    <source>
        <strain>301 / Serotype 2a</strain>
        <plasmid>pCP301</plasmid>
    </source>
</reference>
<reference key="6">
    <citation type="journal article" date="2008" name="PLoS Pathog.">
        <title>A functional genomic yeast screen to identify pathogenic bacterial proteins.</title>
        <authorList>
            <person name="Slagowski N.L."/>
            <person name="Kramer R.W."/>
            <person name="Morrison M.F."/>
            <person name="LaBaer J."/>
            <person name="Lesser C.F."/>
        </authorList>
    </citation>
    <scope>SUBCELLULAR LOCATION</scope>
    <scope>SECRETION VIA TYPE III SECRETION SYSTEM</scope>
</reference>
<reference key="7">
    <citation type="journal article" date="2013" name="Nature">
        <title>Proteolytic elimination of N-myristoyl modifications by the Shigella virulence factor IpaJ.</title>
        <authorList>
            <person name="Burnaevskiy N."/>
            <person name="Fox T.G."/>
            <person name="Plymire D.A."/>
            <person name="Ertelt J.M."/>
            <person name="Weigele B.A."/>
            <person name="Selyunin A.S."/>
            <person name="Way S.S."/>
            <person name="Patrie S.M."/>
            <person name="Alto N.M."/>
        </authorList>
    </citation>
    <scope>FUNCTION</scope>
    <scope>MUTAGENESIS OF CYS-64; HIS-206 AND ASP-218</scope>
    <scope>ACTIVE SITE</scope>
</reference>
<sequence>MSEQRKPCKRGCIHTGVMLYGVLLQGAIPREYMISHQTDVRVNENRVNEQGCFLARKQMYDNSCGAASLLCAAKELGVDKIPQYKGSMSEMTRKSSLDLDNRCERDLYLITSGNYNPRIHKDNIADAGYSMPDKIVMATRLLGLNAYVVEESNIFSQVISFIYPDARDLLIGMGCNIVHQRDVLSSNQRVLEAVAVSFIGVPVGLHWVLCRPDGSYMDPAVGENYSCFSTMELGARRSNSNFIGYTKIGISIVITNEAL</sequence>